<reference key="1">
    <citation type="journal article" date="2007" name="PLoS ONE">
        <title>Analysis of the neurotoxin complex genes in Clostridium botulinum A1-A4 and B1 strains: BoNT/A3, /Ba4 and /B1 clusters are located within plasmids.</title>
        <authorList>
            <person name="Smith T.J."/>
            <person name="Hill K.K."/>
            <person name="Foley B.T."/>
            <person name="Detter J.C."/>
            <person name="Munk A.C."/>
            <person name="Bruce D.C."/>
            <person name="Doggett N.A."/>
            <person name="Smith L.A."/>
            <person name="Marks J.D."/>
            <person name="Xie G."/>
            <person name="Brettin T.S."/>
        </authorList>
    </citation>
    <scope>NUCLEOTIDE SEQUENCE [LARGE SCALE GENOMIC DNA]</scope>
    <source>
        <strain>Loch Maree / Type A3</strain>
    </source>
</reference>
<evidence type="ECO:0000255" key="1">
    <source>
        <dbReference type="HAMAP-Rule" id="MF_00386"/>
    </source>
</evidence>
<proteinExistence type="inferred from homology"/>
<organism>
    <name type="scientific">Clostridium botulinum (strain Loch Maree / Type A3)</name>
    <dbReference type="NCBI Taxonomy" id="498214"/>
    <lineage>
        <taxon>Bacteria</taxon>
        <taxon>Bacillati</taxon>
        <taxon>Bacillota</taxon>
        <taxon>Clostridia</taxon>
        <taxon>Eubacteriales</taxon>
        <taxon>Clostridiaceae</taxon>
        <taxon>Clostridium</taxon>
    </lineage>
</organism>
<keyword id="KW-1003">Cell membrane</keyword>
<keyword id="KW-0472">Membrane</keyword>
<dbReference type="EMBL" id="CP000962">
    <property type="protein sequence ID" value="ACA55576.1"/>
    <property type="molecule type" value="Genomic_DNA"/>
</dbReference>
<dbReference type="KEGG" id="cbl:CLK_3130"/>
<dbReference type="HOGENOM" id="CLU_144811_6_0_9"/>
<dbReference type="GO" id="GO:0005886">
    <property type="term" value="C:plasma membrane"/>
    <property type="evidence" value="ECO:0007669"/>
    <property type="project" value="UniProtKB-SubCell"/>
</dbReference>
<dbReference type="HAMAP" id="MF_00386">
    <property type="entry name" value="UPF0161_YidD"/>
    <property type="match status" value="1"/>
</dbReference>
<dbReference type="InterPro" id="IPR002696">
    <property type="entry name" value="Membr_insert_effic_factor_YidD"/>
</dbReference>
<dbReference type="NCBIfam" id="TIGR00278">
    <property type="entry name" value="membrane protein insertion efficiency factor YidD"/>
    <property type="match status" value="1"/>
</dbReference>
<dbReference type="PANTHER" id="PTHR33383">
    <property type="entry name" value="MEMBRANE PROTEIN INSERTION EFFICIENCY FACTOR-RELATED"/>
    <property type="match status" value="1"/>
</dbReference>
<dbReference type="PANTHER" id="PTHR33383:SF1">
    <property type="entry name" value="MEMBRANE PROTEIN INSERTION EFFICIENCY FACTOR-RELATED"/>
    <property type="match status" value="1"/>
</dbReference>
<dbReference type="Pfam" id="PF01809">
    <property type="entry name" value="YidD"/>
    <property type="match status" value="1"/>
</dbReference>
<dbReference type="SMART" id="SM01234">
    <property type="entry name" value="Haemolytic"/>
    <property type="match status" value="1"/>
</dbReference>
<sequence length="69" mass="8031">MKNLLICIIKMYRKYISPLKRPSCRFYPTCSQYSIEAIEKYGALKGTLISIKRILKCHPFNEGGYDPVK</sequence>
<gene>
    <name type="ordered locus">CLK_3130</name>
</gene>
<protein>
    <recommendedName>
        <fullName evidence="1">Putative membrane protein insertion efficiency factor</fullName>
    </recommendedName>
</protein>
<name>YIDD_CLOBM</name>
<accession>B1KUB5</accession>
<feature type="chain" id="PRO_1000122630" description="Putative membrane protein insertion efficiency factor">
    <location>
        <begin position="1"/>
        <end position="69"/>
    </location>
</feature>
<comment type="function">
    <text evidence="1">Could be involved in insertion of integral membrane proteins into the membrane.</text>
</comment>
<comment type="subcellular location">
    <subcellularLocation>
        <location evidence="1">Cell membrane</location>
        <topology evidence="1">Peripheral membrane protein</topology>
        <orientation evidence="1">Cytoplasmic side</orientation>
    </subcellularLocation>
</comment>
<comment type="similarity">
    <text evidence="1">Belongs to the UPF0161 family.</text>
</comment>